<name>RPOA_BACCZ</name>
<accession>Q63H64</accession>
<keyword id="KW-0240">DNA-directed RNA polymerase</keyword>
<keyword id="KW-0548">Nucleotidyltransferase</keyword>
<keyword id="KW-0804">Transcription</keyword>
<keyword id="KW-0808">Transferase</keyword>
<organism>
    <name type="scientific">Bacillus cereus (strain ZK / E33L)</name>
    <dbReference type="NCBI Taxonomy" id="288681"/>
    <lineage>
        <taxon>Bacteria</taxon>
        <taxon>Bacillati</taxon>
        <taxon>Bacillota</taxon>
        <taxon>Bacilli</taxon>
        <taxon>Bacillales</taxon>
        <taxon>Bacillaceae</taxon>
        <taxon>Bacillus</taxon>
        <taxon>Bacillus cereus group</taxon>
    </lineage>
</organism>
<comment type="function">
    <text evidence="1">DNA-dependent RNA polymerase catalyzes the transcription of DNA into RNA using the four ribonucleoside triphosphates as substrates.</text>
</comment>
<comment type="catalytic activity">
    <reaction evidence="1">
        <text>RNA(n) + a ribonucleoside 5'-triphosphate = RNA(n+1) + diphosphate</text>
        <dbReference type="Rhea" id="RHEA:21248"/>
        <dbReference type="Rhea" id="RHEA-COMP:14527"/>
        <dbReference type="Rhea" id="RHEA-COMP:17342"/>
        <dbReference type="ChEBI" id="CHEBI:33019"/>
        <dbReference type="ChEBI" id="CHEBI:61557"/>
        <dbReference type="ChEBI" id="CHEBI:140395"/>
        <dbReference type="EC" id="2.7.7.6"/>
    </reaction>
</comment>
<comment type="subunit">
    <text evidence="1">Homodimer. The RNAP catalytic core consists of 2 alpha, 1 beta, 1 beta' and 1 omega subunit. When a sigma factor is associated with the core the holoenzyme is formed, which can initiate transcription.</text>
</comment>
<comment type="domain">
    <text evidence="1">The N-terminal domain is essential for RNAP assembly and basal transcription, whereas the C-terminal domain is involved in interaction with transcriptional regulators and with upstream promoter elements.</text>
</comment>
<comment type="similarity">
    <text evidence="1">Belongs to the RNA polymerase alpha chain family.</text>
</comment>
<proteinExistence type="inferred from homology"/>
<evidence type="ECO:0000255" key="1">
    <source>
        <dbReference type="HAMAP-Rule" id="MF_00059"/>
    </source>
</evidence>
<dbReference type="EC" id="2.7.7.6" evidence="1"/>
<dbReference type="EMBL" id="CP000001">
    <property type="protein sequence ID" value="AAU20102.1"/>
    <property type="molecule type" value="Genomic_DNA"/>
</dbReference>
<dbReference type="RefSeq" id="WP_000569643.1">
    <property type="nucleotide sequence ID" value="NZ_CP009968.1"/>
</dbReference>
<dbReference type="SMR" id="Q63H64"/>
<dbReference type="KEGG" id="bcz:BCE33L0130"/>
<dbReference type="PATRIC" id="fig|288681.22.peg.20"/>
<dbReference type="Proteomes" id="UP000002612">
    <property type="component" value="Chromosome"/>
</dbReference>
<dbReference type="GO" id="GO:0005737">
    <property type="term" value="C:cytoplasm"/>
    <property type="evidence" value="ECO:0007669"/>
    <property type="project" value="UniProtKB-ARBA"/>
</dbReference>
<dbReference type="GO" id="GO:0000428">
    <property type="term" value="C:DNA-directed RNA polymerase complex"/>
    <property type="evidence" value="ECO:0007669"/>
    <property type="project" value="UniProtKB-KW"/>
</dbReference>
<dbReference type="GO" id="GO:0003677">
    <property type="term" value="F:DNA binding"/>
    <property type="evidence" value="ECO:0007669"/>
    <property type="project" value="UniProtKB-UniRule"/>
</dbReference>
<dbReference type="GO" id="GO:0003899">
    <property type="term" value="F:DNA-directed RNA polymerase activity"/>
    <property type="evidence" value="ECO:0007669"/>
    <property type="project" value="UniProtKB-UniRule"/>
</dbReference>
<dbReference type="GO" id="GO:0046983">
    <property type="term" value="F:protein dimerization activity"/>
    <property type="evidence" value="ECO:0007669"/>
    <property type="project" value="InterPro"/>
</dbReference>
<dbReference type="GO" id="GO:0006351">
    <property type="term" value="P:DNA-templated transcription"/>
    <property type="evidence" value="ECO:0007669"/>
    <property type="project" value="UniProtKB-UniRule"/>
</dbReference>
<dbReference type="CDD" id="cd06928">
    <property type="entry name" value="RNAP_alpha_NTD"/>
    <property type="match status" value="1"/>
</dbReference>
<dbReference type="FunFam" id="1.10.150.20:FF:000001">
    <property type="entry name" value="DNA-directed RNA polymerase subunit alpha"/>
    <property type="match status" value="1"/>
</dbReference>
<dbReference type="FunFam" id="2.170.120.12:FF:000001">
    <property type="entry name" value="DNA-directed RNA polymerase subunit alpha"/>
    <property type="match status" value="1"/>
</dbReference>
<dbReference type="Gene3D" id="1.10.150.20">
    <property type="entry name" value="5' to 3' exonuclease, C-terminal subdomain"/>
    <property type="match status" value="1"/>
</dbReference>
<dbReference type="Gene3D" id="2.170.120.12">
    <property type="entry name" value="DNA-directed RNA polymerase, insert domain"/>
    <property type="match status" value="1"/>
</dbReference>
<dbReference type="Gene3D" id="3.30.1360.10">
    <property type="entry name" value="RNA polymerase, RBP11-like subunit"/>
    <property type="match status" value="1"/>
</dbReference>
<dbReference type="HAMAP" id="MF_00059">
    <property type="entry name" value="RNApol_bact_RpoA"/>
    <property type="match status" value="1"/>
</dbReference>
<dbReference type="InterPro" id="IPR011262">
    <property type="entry name" value="DNA-dir_RNA_pol_insert"/>
</dbReference>
<dbReference type="InterPro" id="IPR011263">
    <property type="entry name" value="DNA-dir_RNA_pol_RpoA/D/Rpb3"/>
</dbReference>
<dbReference type="InterPro" id="IPR011773">
    <property type="entry name" value="DNA-dir_RpoA"/>
</dbReference>
<dbReference type="InterPro" id="IPR036603">
    <property type="entry name" value="RBP11-like"/>
</dbReference>
<dbReference type="InterPro" id="IPR011260">
    <property type="entry name" value="RNAP_asu_C"/>
</dbReference>
<dbReference type="InterPro" id="IPR036643">
    <property type="entry name" value="RNApol_insert_sf"/>
</dbReference>
<dbReference type="NCBIfam" id="NF003513">
    <property type="entry name" value="PRK05182.1-2"/>
    <property type="match status" value="1"/>
</dbReference>
<dbReference type="NCBIfam" id="NF003515">
    <property type="entry name" value="PRK05182.2-1"/>
    <property type="match status" value="1"/>
</dbReference>
<dbReference type="NCBIfam" id="NF003516">
    <property type="entry name" value="PRK05182.2-2"/>
    <property type="match status" value="1"/>
</dbReference>
<dbReference type="NCBIfam" id="NF003519">
    <property type="entry name" value="PRK05182.2-5"/>
    <property type="match status" value="1"/>
</dbReference>
<dbReference type="NCBIfam" id="TIGR02027">
    <property type="entry name" value="rpoA"/>
    <property type="match status" value="1"/>
</dbReference>
<dbReference type="Pfam" id="PF01000">
    <property type="entry name" value="RNA_pol_A_bac"/>
    <property type="match status" value="1"/>
</dbReference>
<dbReference type="Pfam" id="PF03118">
    <property type="entry name" value="RNA_pol_A_CTD"/>
    <property type="match status" value="1"/>
</dbReference>
<dbReference type="Pfam" id="PF01193">
    <property type="entry name" value="RNA_pol_L"/>
    <property type="match status" value="1"/>
</dbReference>
<dbReference type="SMART" id="SM00662">
    <property type="entry name" value="RPOLD"/>
    <property type="match status" value="1"/>
</dbReference>
<dbReference type="SUPFAM" id="SSF47789">
    <property type="entry name" value="C-terminal domain of RNA polymerase alpha subunit"/>
    <property type="match status" value="1"/>
</dbReference>
<dbReference type="SUPFAM" id="SSF56553">
    <property type="entry name" value="Insert subdomain of RNA polymerase alpha subunit"/>
    <property type="match status" value="1"/>
</dbReference>
<dbReference type="SUPFAM" id="SSF55257">
    <property type="entry name" value="RBP11-like subunits of RNA polymerase"/>
    <property type="match status" value="1"/>
</dbReference>
<feature type="chain" id="PRO_0000175260" description="DNA-directed RNA polymerase subunit alpha">
    <location>
        <begin position="1"/>
        <end position="314"/>
    </location>
</feature>
<feature type="region of interest" description="Alpha N-terminal domain (alpha-NTD)" evidence="1">
    <location>
        <begin position="1"/>
        <end position="228"/>
    </location>
</feature>
<feature type="region of interest" description="Alpha C-terminal domain (alpha-CTD)" evidence="1">
    <location>
        <begin position="245"/>
        <end position="314"/>
    </location>
</feature>
<gene>
    <name evidence="1" type="primary">rpoA</name>
    <name type="ordered locus">BCE33L0130</name>
</gene>
<sequence length="314" mass="34936">MIEIEKPKIETVELNEDAKYGKFVIEPLERGYGTTLGNSLRRILLSSLPGAAVTAIQIDGVLHEFSTVEGVVEDVTTIILNLKKLALKIYSEEEKTLEIDVQGEGIVTAADITHDSDVEILNPDLHIATLAKDAHFRVRLTAKRGRGYTPADANKSEDQPIGVIPIDSIYTPVSRVTYQVEKTRVGQVANYDKLTLDVWTDGSIGPKEAISLGAKILTEHLNIFVGLTDEAQNAEIMVEKEEDQKEKVLEMTIEELDLSVRSYNCLKRAGINTVQELANKTEEDMMKVRNLGRKSLEEVKHKLEELGLGLRKDD</sequence>
<protein>
    <recommendedName>
        <fullName evidence="1">DNA-directed RNA polymerase subunit alpha</fullName>
        <shortName evidence="1">RNAP subunit alpha</shortName>
        <ecNumber evidence="1">2.7.7.6</ecNumber>
    </recommendedName>
    <alternativeName>
        <fullName evidence="1">RNA polymerase subunit alpha</fullName>
    </alternativeName>
    <alternativeName>
        <fullName evidence="1">Transcriptase subunit alpha</fullName>
    </alternativeName>
</protein>
<reference key="1">
    <citation type="journal article" date="2006" name="J. Bacteriol.">
        <title>Pathogenomic sequence analysis of Bacillus cereus and Bacillus thuringiensis isolates closely related to Bacillus anthracis.</title>
        <authorList>
            <person name="Han C.S."/>
            <person name="Xie G."/>
            <person name="Challacombe J.F."/>
            <person name="Altherr M.R."/>
            <person name="Bhotika S.S."/>
            <person name="Bruce D."/>
            <person name="Campbell C.S."/>
            <person name="Campbell M.L."/>
            <person name="Chen J."/>
            <person name="Chertkov O."/>
            <person name="Cleland C."/>
            <person name="Dimitrijevic M."/>
            <person name="Doggett N.A."/>
            <person name="Fawcett J.J."/>
            <person name="Glavina T."/>
            <person name="Goodwin L.A."/>
            <person name="Hill K.K."/>
            <person name="Hitchcock P."/>
            <person name="Jackson P.J."/>
            <person name="Keim P."/>
            <person name="Kewalramani A.R."/>
            <person name="Longmire J."/>
            <person name="Lucas S."/>
            <person name="Malfatti S."/>
            <person name="McMurry K."/>
            <person name="Meincke L.J."/>
            <person name="Misra M."/>
            <person name="Moseman B.L."/>
            <person name="Mundt M."/>
            <person name="Munk A.C."/>
            <person name="Okinaka R.T."/>
            <person name="Parson-Quintana B."/>
            <person name="Reilly L.P."/>
            <person name="Richardson P."/>
            <person name="Robinson D.L."/>
            <person name="Rubin E."/>
            <person name="Saunders E."/>
            <person name="Tapia R."/>
            <person name="Tesmer J.G."/>
            <person name="Thayer N."/>
            <person name="Thompson L.S."/>
            <person name="Tice H."/>
            <person name="Ticknor L.O."/>
            <person name="Wills P.L."/>
            <person name="Brettin T.S."/>
            <person name="Gilna P."/>
        </authorList>
    </citation>
    <scope>NUCLEOTIDE SEQUENCE [LARGE SCALE GENOMIC DNA]</scope>
    <source>
        <strain>ZK / E33L</strain>
    </source>
</reference>